<keyword id="KW-0002">3D-structure</keyword>
<keyword id="KW-0067">ATP-binding</keyword>
<keyword id="KW-0963">Cytoplasm</keyword>
<keyword id="KW-0418">Kinase</keyword>
<keyword id="KW-0520">NAD</keyword>
<keyword id="KW-0521">NADP</keyword>
<keyword id="KW-0547">Nucleotide-binding</keyword>
<keyword id="KW-1185">Reference proteome</keyword>
<keyword id="KW-0808">Transferase</keyword>
<organism>
    <name type="scientific">Yersinia pestis</name>
    <dbReference type="NCBI Taxonomy" id="632"/>
    <lineage>
        <taxon>Bacteria</taxon>
        <taxon>Pseudomonadati</taxon>
        <taxon>Pseudomonadota</taxon>
        <taxon>Gammaproteobacteria</taxon>
        <taxon>Enterobacterales</taxon>
        <taxon>Yersiniaceae</taxon>
        <taxon>Yersinia</taxon>
    </lineage>
</organism>
<dbReference type="EC" id="2.7.1.23" evidence="2"/>
<dbReference type="EMBL" id="AL590842">
    <property type="protein sequence ID" value="CAL19772.1"/>
    <property type="molecule type" value="Genomic_DNA"/>
</dbReference>
<dbReference type="EMBL" id="AE009952">
    <property type="protein sequence ID" value="AAM86624.1"/>
    <property type="molecule type" value="Genomic_DNA"/>
</dbReference>
<dbReference type="EMBL" id="AE017042">
    <property type="protein sequence ID" value="AAS61300.1"/>
    <property type="status" value="ALT_INIT"/>
    <property type="molecule type" value="Genomic_DNA"/>
</dbReference>
<dbReference type="PIR" id="AB0136">
    <property type="entry name" value="AB0136"/>
</dbReference>
<dbReference type="RefSeq" id="WP_002210719.1">
    <property type="nucleotide sequence ID" value="NZ_WUCM01000016.1"/>
</dbReference>
<dbReference type="RefSeq" id="YP_002346149.1">
    <property type="nucleotide sequence ID" value="NC_003143.1"/>
</dbReference>
<dbReference type="PDB" id="4HAO">
    <property type="method" value="X-ray"/>
    <property type="resolution" value="2.55 A"/>
    <property type="chains" value="A/B=1-293"/>
</dbReference>
<dbReference type="PDBsum" id="4HAO"/>
<dbReference type="SMR" id="Q8ZH09"/>
<dbReference type="IntAct" id="Q8ZH09">
    <property type="interactions" value="1"/>
</dbReference>
<dbReference type="STRING" id="214092.YPO1106"/>
<dbReference type="PaxDb" id="214092-YPO1106"/>
<dbReference type="DNASU" id="1148021"/>
<dbReference type="EnsemblBacteria" id="AAS61300">
    <property type="protein sequence ID" value="AAS61300"/>
    <property type="gene ID" value="YP_1050"/>
</dbReference>
<dbReference type="GeneID" id="57977242"/>
<dbReference type="KEGG" id="ype:YPO1106"/>
<dbReference type="KEGG" id="ypk:y3074"/>
<dbReference type="KEGG" id="ypm:YP_1050"/>
<dbReference type="PATRIC" id="fig|214092.21.peg.1398"/>
<dbReference type="eggNOG" id="COG0061">
    <property type="taxonomic scope" value="Bacteria"/>
</dbReference>
<dbReference type="HOGENOM" id="CLU_008831_0_1_6"/>
<dbReference type="OMA" id="SMCHFEI"/>
<dbReference type="OrthoDB" id="9774737at2"/>
<dbReference type="EvolutionaryTrace" id="Q8ZH09"/>
<dbReference type="Proteomes" id="UP000000815">
    <property type="component" value="Chromosome"/>
</dbReference>
<dbReference type="Proteomes" id="UP000001019">
    <property type="component" value="Chromosome"/>
</dbReference>
<dbReference type="Proteomes" id="UP000002490">
    <property type="component" value="Chromosome"/>
</dbReference>
<dbReference type="GO" id="GO:0005737">
    <property type="term" value="C:cytoplasm"/>
    <property type="evidence" value="ECO:0007669"/>
    <property type="project" value="UniProtKB-SubCell"/>
</dbReference>
<dbReference type="GO" id="GO:0005524">
    <property type="term" value="F:ATP binding"/>
    <property type="evidence" value="ECO:0007669"/>
    <property type="project" value="UniProtKB-KW"/>
</dbReference>
<dbReference type="GO" id="GO:0046872">
    <property type="term" value="F:metal ion binding"/>
    <property type="evidence" value="ECO:0007669"/>
    <property type="project" value="UniProtKB-UniRule"/>
</dbReference>
<dbReference type="GO" id="GO:0051287">
    <property type="term" value="F:NAD binding"/>
    <property type="evidence" value="ECO:0007669"/>
    <property type="project" value="UniProtKB-ARBA"/>
</dbReference>
<dbReference type="GO" id="GO:0003951">
    <property type="term" value="F:NAD+ kinase activity"/>
    <property type="evidence" value="ECO:0000318"/>
    <property type="project" value="GO_Central"/>
</dbReference>
<dbReference type="GO" id="GO:0019674">
    <property type="term" value="P:NAD metabolic process"/>
    <property type="evidence" value="ECO:0007669"/>
    <property type="project" value="InterPro"/>
</dbReference>
<dbReference type="GO" id="GO:0006741">
    <property type="term" value="P:NADP biosynthetic process"/>
    <property type="evidence" value="ECO:0000318"/>
    <property type="project" value="GO_Central"/>
</dbReference>
<dbReference type="FunFam" id="2.60.200.30:FF:000001">
    <property type="entry name" value="NAD kinase"/>
    <property type="match status" value="1"/>
</dbReference>
<dbReference type="FunFam" id="3.40.50.10330:FF:000004">
    <property type="entry name" value="NAD kinase"/>
    <property type="match status" value="1"/>
</dbReference>
<dbReference type="Gene3D" id="3.40.50.10330">
    <property type="entry name" value="Probable inorganic polyphosphate/atp-NAD kinase, domain 1"/>
    <property type="match status" value="1"/>
</dbReference>
<dbReference type="Gene3D" id="2.60.200.30">
    <property type="entry name" value="Probable inorganic polyphosphate/atp-NAD kinase, domain 2"/>
    <property type="match status" value="1"/>
</dbReference>
<dbReference type="HAMAP" id="MF_00361">
    <property type="entry name" value="NAD_kinase"/>
    <property type="match status" value="1"/>
</dbReference>
<dbReference type="InterPro" id="IPR017438">
    <property type="entry name" value="ATP-NAD_kinase_N"/>
</dbReference>
<dbReference type="InterPro" id="IPR017437">
    <property type="entry name" value="ATP-NAD_kinase_PpnK-typ_C"/>
</dbReference>
<dbReference type="InterPro" id="IPR016064">
    <property type="entry name" value="NAD/diacylglycerol_kinase_sf"/>
</dbReference>
<dbReference type="InterPro" id="IPR002504">
    <property type="entry name" value="NADK"/>
</dbReference>
<dbReference type="NCBIfam" id="NF002306">
    <property type="entry name" value="PRK01231.1"/>
    <property type="match status" value="1"/>
</dbReference>
<dbReference type="NCBIfam" id="NF002893">
    <property type="entry name" value="PRK03378.1"/>
    <property type="match status" value="1"/>
</dbReference>
<dbReference type="PANTHER" id="PTHR20275">
    <property type="entry name" value="NAD KINASE"/>
    <property type="match status" value="1"/>
</dbReference>
<dbReference type="PANTHER" id="PTHR20275:SF0">
    <property type="entry name" value="NAD KINASE"/>
    <property type="match status" value="1"/>
</dbReference>
<dbReference type="Pfam" id="PF01513">
    <property type="entry name" value="NAD_kinase"/>
    <property type="match status" value="1"/>
</dbReference>
<dbReference type="Pfam" id="PF20143">
    <property type="entry name" value="NAD_kinase_C"/>
    <property type="match status" value="1"/>
</dbReference>
<dbReference type="SUPFAM" id="SSF111331">
    <property type="entry name" value="NAD kinase/diacylglycerol kinase-like"/>
    <property type="match status" value="1"/>
</dbReference>
<feature type="chain" id="PRO_0000120695" description="NAD kinase">
    <location>
        <begin position="1"/>
        <end position="293"/>
    </location>
</feature>
<feature type="active site" description="Proton acceptor" evidence="2">
    <location>
        <position position="74"/>
    </location>
</feature>
<feature type="binding site" evidence="2">
    <location>
        <begin position="74"/>
        <end position="75"/>
    </location>
    <ligand>
        <name>NAD(+)</name>
        <dbReference type="ChEBI" id="CHEBI:57540"/>
    </ligand>
</feature>
<feature type="binding site" evidence="2">
    <location>
        <begin position="148"/>
        <end position="149"/>
    </location>
    <ligand>
        <name>NAD(+)</name>
        <dbReference type="ChEBI" id="CHEBI:57540"/>
    </ligand>
</feature>
<feature type="binding site" evidence="2">
    <location>
        <position position="159"/>
    </location>
    <ligand>
        <name>NAD(+)</name>
        <dbReference type="ChEBI" id="CHEBI:57540"/>
    </ligand>
</feature>
<feature type="binding site" evidence="2">
    <location>
        <position position="176"/>
    </location>
    <ligand>
        <name>NAD(+)</name>
        <dbReference type="ChEBI" id="CHEBI:57540"/>
    </ligand>
</feature>
<feature type="binding site" evidence="2">
    <location>
        <position position="178"/>
    </location>
    <ligand>
        <name>NAD(+)</name>
        <dbReference type="ChEBI" id="CHEBI:57540"/>
    </ligand>
</feature>
<feature type="binding site" evidence="2">
    <location>
        <position position="186"/>
    </location>
    <ligand>
        <name>NAD(+)</name>
        <dbReference type="ChEBI" id="CHEBI:57540"/>
    </ligand>
</feature>
<feature type="binding site" evidence="2">
    <location>
        <begin position="189"/>
        <end position="194"/>
    </location>
    <ligand>
        <name>NAD(+)</name>
        <dbReference type="ChEBI" id="CHEBI:57540"/>
    </ligand>
</feature>
<feature type="binding site" evidence="2">
    <location>
        <position position="248"/>
    </location>
    <ligand>
        <name>NAD(+)</name>
        <dbReference type="ChEBI" id="CHEBI:57540"/>
    </ligand>
</feature>
<feature type="site" description="Responsible for conferring strict specificity to NAD" evidence="1">
    <location>
        <position position="176"/>
    </location>
</feature>
<feature type="strand" evidence="5">
    <location>
        <begin position="7"/>
        <end position="12"/>
    </location>
</feature>
<feature type="helix" evidence="5">
    <location>
        <begin position="21"/>
        <end position="33"/>
    </location>
</feature>
<feature type="strand" evidence="5">
    <location>
        <begin position="37"/>
        <end position="41"/>
    </location>
</feature>
<feature type="helix" evidence="5">
    <location>
        <begin position="42"/>
        <end position="48"/>
    </location>
</feature>
<feature type="strand" evidence="5">
    <location>
        <begin position="54"/>
        <end position="56"/>
    </location>
</feature>
<feature type="helix" evidence="5">
    <location>
        <begin position="58"/>
        <end position="64"/>
    </location>
</feature>
<feature type="strand" evidence="5">
    <location>
        <begin position="66"/>
        <end position="72"/>
    </location>
</feature>
<feature type="helix" evidence="5">
    <location>
        <begin position="74"/>
        <end position="84"/>
    </location>
</feature>
<feature type="turn" evidence="5">
    <location>
        <begin position="85"/>
        <end position="88"/>
    </location>
</feature>
<feature type="strand" evidence="5">
    <location>
        <begin position="90"/>
        <end position="94"/>
    </location>
</feature>
<feature type="strand" evidence="5">
    <location>
        <begin position="96"/>
        <end position="98"/>
    </location>
</feature>
<feature type="helix" evidence="5">
    <location>
        <begin position="107"/>
        <end position="109"/>
    </location>
</feature>
<feature type="helix" evidence="5">
    <location>
        <begin position="110"/>
        <end position="119"/>
    </location>
</feature>
<feature type="strand" evidence="5">
    <location>
        <begin position="122"/>
        <end position="135"/>
    </location>
</feature>
<feature type="strand" evidence="5">
    <location>
        <begin position="142"/>
        <end position="156"/>
    </location>
</feature>
<feature type="strand" evidence="5">
    <location>
        <begin position="161"/>
        <end position="167"/>
    </location>
</feature>
<feature type="strand" evidence="5">
    <location>
        <begin position="170"/>
        <end position="183"/>
    </location>
</feature>
<feature type="helix" evidence="5">
    <location>
        <begin position="186"/>
        <end position="189"/>
    </location>
</feature>
<feature type="helix" evidence="5">
    <location>
        <begin position="191"/>
        <end position="194"/>
    </location>
</feature>
<feature type="strand" evidence="5">
    <location>
        <begin position="205"/>
        <end position="213"/>
    </location>
</feature>
<feature type="strand" evidence="5">
    <location>
        <begin position="222"/>
        <end position="225"/>
    </location>
</feature>
<feature type="strand" evidence="5">
    <location>
        <begin position="230"/>
        <end position="235"/>
    </location>
</feature>
<feature type="strand" evidence="5">
    <location>
        <begin position="241"/>
        <end position="245"/>
    </location>
</feature>
<feature type="strand" evidence="5">
    <location>
        <begin position="251"/>
        <end position="253"/>
    </location>
</feature>
<feature type="strand" evidence="5">
    <location>
        <begin position="258"/>
        <end position="273"/>
    </location>
</feature>
<feature type="helix" evidence="5">
    <location>
        <begin position="278"/>
        <end position="286"/>
    </location>
</feature>
<sequence length="293" mass="32398">MNNRRFDCIGIVGHPRHPAALATHEILYHWLKARGYAVMVEQQIAHDLNLTDAITGSLADIGQKADLAVVVGGDGNMLGAARVLARYDIKVIGVNRGNLGFLTDLDPDNALQQLSDVLEGEYLSEQRFLLETHVRRTNQQSRISTAINEVVLHPGKVAHMIEFEVYIDDRFAFSQRSDGLIIATPTGSTAYSLSAGGPILTPTLDAIVLVPMFPHTLTARPLVISSSSTIRLKFSHITSDLEISCDSQIALPIQEGEEVLIRRSDFHLNLIHPKDYSYFNTLSTKLGWSKKLF</sequence>
<comment type="function">
    <text evidence="2">Involved in the regulation of the intracellular balance of NAD and NADP, and is a key enzyme in the biosynthesis of NADP. Catalyzes specifically the phosphorylation on 2'-hydroxyl of the adenosine moiety of NAD to yield NADP.</text>
</comment>
<comment type="catalytic activity">
    <reaction evidence="2">
        <text>NAD(+) + ATP = ADP + NADP(+) + H(+)</text>
        <dbReference type="Rhea" id="RHEA:18629"/>
        <dbReference type="ChEBI" id="CHEBI:15378"/>
        <dbReference type="ChEBI" id="CHEBI:30616"/>
        <dbReference type="ChEBI" id="CHEBI:57540"/>
        <dbReference type="ChEBI" id="CHEBI:58349"/>
        <dbReference type="ChEBI" id="CHEBI:456216"/>
        <dbReference type="EC" id="2.7.1.23"/>
    </reaction>
</comment>
<comment type="cofactor">
    <cofactor evidence="2">
        <name>a divalent metal cation</name>
        <dbReference type="ChEBI" id="CHEBI:60240"/>
    </cofactor>
</comment>
<comment type="subunit">
    <text evidence="3">Homodimer.</text>
</comment>
<comment type="subcellular location">
    <subcellularLocation>
        <location evidence="2">Cytoplasm</location>
    </subcellularLocation>
</comment>
<comment type="similarity">
    <text evidence="2">Belongs to the NAD kinase family.</text>
</comment>
<comment type="sequence caution" evidence="4">
    <conflict type="erroneous initiation">
        <sequence resource="EMBL-CDS" id="AAS61300"/>
    </conflict>
    <text>Truncated N-terminus.</text>
</comment>
<protein>
    <recommendedName>
        <fullName evidence="2">NAD kinase</fullName>
        <ecNumber evidence="2">2.7.1.23</ecNumber>
    </recommendedName>
    <alternativeName>
        <fullName evidence="2">ATP-dependent NAD kinase</fullName>
    </alternativeName>
</protein>
<evidence type="ECO:0000250" key="1"/>
<evidence type="ECO:0000255" key="2">
    <source>
        <dbReference type="HAMAP-Rule" id="MF_00361"/>
    </source>
</evidence>
<evidence type="ECO:0000269" key="3">
    <source ref="4"/>
</evidence>
<evidence type="ECO:0000305" key="4"/>
<evidence type="ECO:0007829" key="5">
    <source>
        <dbReference type="PDB" id="4HAO"/>
    </source>
</evidence>
<gene>
    <name evidence="2" type="primary">nadK</name>
    <name type="ordered locus">YPO1106</name>
    <name type="ordered locus">y3074</name>
    <name type="ordered locus">YP_1050</name>
</gene>
<proteinExistence type="evidence at protein level"/>
<accession>Q8ZH09</accession>
<accession>Q0WHT9</accession>
<name>NADK_YERPE</name>
<reference key="1">
    <citation type="journal article" date="2001" name="Nature">
        <title>Genome sequence of Yersinia pestis, the causative agent of plague.</title>
        <authorList>
            <person name="Parkhill J."/>
            <person name="Wren B.W."/>
            <person name="Thomson N.R."/>
            <person name="Titball R.W."/>
            <person name="Holden M.T.G."/>
            <person name="Prentice M.B."/>
            <person name="Sebaihia M."/>
            <person name="James K.D."/>
            <person name="Churcher C.M."/>
            <person name="Mungall K.L."/>
            <person name="Baker S."/>
            <person name="Basham D."/>
            <person name="Bentley S.D."/>
            <person name="Brooks K."/>
            <person name="Cerdeno-Tarraga A.-M."/>
            <person name="Chillingworth T."/>
            <person name="Cronin A."/>
            <person name="Davies R.M."/>
            <person name="Davis P."/>
            <person name="Dougan G."/>
            <person name="Feltwell T."/>
            <person name="Hamlin N."/>
            <person name="Holroyd S."/>
            <person name="Jagels K."/>
            <person name="Karlyshev A.V."/>
            <person name="Leather S."/>
            <person name="Moule S."/>
            <person name="Oyston P.C.F."/>
            <person name="Quail M.A."/>
            <person name="Rutherford K.M."/>
            <person name="Simmonds M."/>
            <person name="Skelton J."/>
            <person name="Stevens K."/>
            <person name="Whitehead S."/>
            <person name="Barrell B.G."/>
        </authorList>
    </citation>
    <scope>NUCLEOTIDE SEQUENCE [LARGE SCALE GENOMIC DNA]</scope>
    <source>
        <strain>CO-92 / Biovar Orientalis</strain>
    </source>
</reference>
<reference key="2">
    <citation type="journal article" date="2002" name="J. Bacteriol.">
        <title>Genome sequence of Yersinia pestis KIM.</title>
        <authorList>
            <person name="Deng W."/>
            <person name="Burland V."/>
            <person name="Plunkett G. III"/>
            <person name="Boutin A."/>
            <person name="Mayhew G.F."/>
            <person name="Liss P."/>
            <person name="Perna N.T."/>
            <person name="Rose D.J."/>
            <person name="Mau B."/>
            <person name="Zhou S."/>
            <person name="Schwartz D.C."/>
            <person name="Fetherston J.D."/>
            <person name="Lindler L.E."/>
            <person name="Brubaker R.R."/>
            <person name="Plano G.V."/>
            <person name="Straley S.C."/>
            <person name="McDonough K.A."/>
            <person name="Nilles M.L."/>
            <person name="Matson J.S."/>
            <person name="Blattner F.R."/>
            <person name="Perry R.D."/>
        </authorList>
    </citation>
    <scope>NUCLEOTIDE SEQUENCE [LARGE SCALE GENOMIC DNA]</scope>
    <source>
        <strain>KIM10+ / Biovar Mediaevalis</strain>
    </source>
</reference>
<reference key="3">
    <citation type="journal article" date="2004" name="DNA Res.">
        <title>Complete genome sequence of Yersinia pestis strain 91001, an isolate avirulent to humans.</title>
        <authorList>
            <person name="Song Y."/>
            <person name="Tong Z."/>
            <person name="Wang J."/>
            <person name="Wang L."/>
            <person name="Guo Z."/>
            <person name="Han Y."/>
            <person name="Zhang J."/>
            <person name="Pei D."/>
            <person name="Zhou D."/>
            <person name="Qin H."/>
            <person name="Pang X."/>
            <person name="Han Y."/>
            <person name="Zhai J."/>
            <person name="Li M."/>
            <person name="Cui B."/>
            <person name="Qi Z."/>
            <person name="Jin L."/>
            <person name="Dai R."/>
            <person name="Chen F."/>
            <person name="Li S."/>
            <person name="Ye C."/>
            <person name="Du Z."/>
            <person name="Lin W."/>
            <person name="Wang J."/>
            <person name="Yu J."/>
            <person name="Yang H."/>
            <person name="Wang J."/>
            <person name="Huang P."/>
            <person name="Yang R."/>
        </authorList>
    </citation>
    <scope>NUCLEOTIDE SEQUENCE [LARGE SCALE GENOMIC DNA]</scope>
    <source>
        <strain>91001 / Biovar Mediaevalis</strain>
    </source>
</reference>
<reference key="4">
    <citation type="submission" date="2012-09" db="PDB data bank">
        <title>Crystal structure of inorganic polyphosphate/ATP-NAD kinase from Yersinia pestis CO92.</title>
        <authorList>
            <consortium name="Center for structural genomics of infectious diseases (CSGID)"/>
        </authorList>
    </citation>
    <scope>X-RAY CRYSTALLOGRAPHY (2.55 ANGSTROMS)</scope>
    <scope>SUBUNIT</scope>
</reference>